<reference key="1">
    <citation type="journal article" date="2003" name="Science">
        <title>A genomic view of the human-Bacteroides thetaiotaomicron symbiosis.</title>
        <authorList>
            <person name="Xu J."/>
            <person name="Bjursell M.K."/>
            <person name="Himrod J."/>
            <person name="Deng S."/>
            <person name="Carmichael L.K."/>
            <person name="Chiang H.C."/>
            <person name="Hooper L.V."/>
            <person name="Gordon J.I."/>
        </authorList>
    </citation>
    <scope>NUCLEOTIDE SEQUENCE [LARGE SCALE GENOMIC DNA]</scope>
    <source>
        <strain>ATCC 29148 / DSM 2079 / JCM 5827 / CCUG 10774 / NCTC 10582 / VPI-5482 / E50</strain>
    </source>
</reference>
<comment type="function">
    <text evidence="1">Involved in the catabolism of L-rhamnose (6-deoxy-L-mannose). Catalyzes the transfer of the gamma-phosphate group from ATP to the 1-hydroxyl group of L-rhamnulose to yield L-rhamnulose 1-phosphate.</text>
</comment>
<comment type="catalytic activity">
    <reaction evidence="1">
        <text>L-rhamnulose + ATP = L-rhamnulose 1-phosphate + ADP + H(+)</text>
        <dbReference type="Rhea" id="RHEA:20117"/>
        <dbReference type="ChEBI" id="CHEBI:15378"/>
        <dbReference type="ChEBI" id="CHEBI:17897"/>
        <dbReference type="ChEBI" id="CHEBI:30616"/>
        <dbReference type="ChEBI" id="CHEBI:58313"/>
        <dbReference type="ChEBI" id="CHEBI:456216"/>
        <dbReference type="EC" id="2.7.1.5"/>
    </reaction>
</comment>
<comment type="cofactor">
    <cofactor evidence="1">
        <name>Mg(2+)</name>
        <dbReference type="ChEBI" id="CHEBI:18420"/>
    </cofactor>
</comment>
<comment type="pathway">
    <text evidence="1">Carbohydrate degradation; L-rhamnose degradation; glycerone phosphate from L-rhamnose: step 2/3.</text>
</comment>
<comment type="similarity">
    <text evidence="1">Belongs to the rhamnulokinase family.</text>
</comment>
<evidence type="ECO:0000255" key="1">
    <source>
        <dbReference type="HAMAP-Rule" id="MF_01535"/>
    </source>
</evidence>
<organism>
    <name type="scientific">Bacteroides thetaiotaomicron (strain ATCC 29148 / DSM 2079 / JCM 5827 / CCUG 10774 / NCTC 10582 / VPI-5482 / E50)</name>
    <dbReference type="NCBI Taxonomy" id="226186"/>
    <lineage>
        <taxon>Bacteria</taxon>
        <taxon>Pseudomonadati</taxon>
        <taxon>Bacteroidota</taxon>
        <taxon>Bacteroidia</taxon>
        <taxon>Bacteroidales</taxon>
        <taxon>Bacteroidaceae</taxon>
        <taxon>Bacteroides</taxon>
    </lineage>
</organism>
<dbReference type="EC" id="2.7.1.5" evidence="1"/>
<dbReference type="EMBL" id="AE015928">
    <property type="protein sequence ID" value="AAO78868.1"/>
    <property type="molecule type" value="Genomic_DNA"/>
</dbReference>
<dbReference type="RefSeq" id="NP_812674.1">
    <property type="nucleotide sequence ID" value="NC_004663.1"/>
</dbReference>
<dbReference type="RefSeq" id="WP_011108961.1">
    <property type="nucleotide sequence ID" value="NC_004663.1"/>
</dbReference>
<dbReference type="SMR" id="Q8A1A3"/>
<dbReference type="FunCoup" id="Q8A1A3">
    <property type="interactions" value="111"/>
</dbReference>
<dbReference type="STRING" id="226186.BT_3763"/>
<dbReference type="PaxDb" id="226186-BT_3763"/>
<dbReference type="EnsemblBacteria" id="AAO78868">
    <property type="protein sequence ID" value="AAO78868"/>
    <property type="gene ID" value="BT_3763"/>
</dbReference>
<dbReference type="GeneID" id="60924933"/>
<dbReference type="KEGG" id="bth:BT_3763"/>
<dbReference type="PATRIC" id="fig|226186.12.peg.3825"/>
<dbReference type="eggNOG" id="COG1070">
    <property type="taxonomic scope" value="Bacteria"/>
</dbReference>
<dbReference type="HOGENOM" id="CLU_039395_0_1_10"/>
<dbReference type="InParanoid" id="Q8A1A3"/>
<dbReference type="OrthoDB" id="9805576at2"/>
<dbReference type="UniPathway" id="UPA00541">
    <property type="reaction ID" value="UER00602"/>
</dbReference>
<dbReference type="Proteomes" id="UP000001414">
    <property type="component" value="Chromosome"/>
</dbReference>
<dbReference type="GO" id="GO:0005829">
    <property type="term" value="C:cytosol"/>
    <property type="evidence" value="ECO:0000318"/>
    <property type="project" value="GO_Central"/>
</dbReference>
<dbReference type="GO" id="GO:0005524">
    <property type="term" value="F:ATP binding"/>
    <property type="evidence" value="ECO:0007669"/>
    <property type="project" value="UniProtKB-KW"/>
</dbReference>
<dbReference type="GO" id="GO:0004370">
    <property type="term" value="F:glycerol kinase activity"/>
    <property type="evidence" value="ECO:0000318"/>
    <property type="project" value="GO_Central"/>
</dbReference>
<dbReference type="GO" id="GO:0008993">
    <property type="term" value="F:rhamnulokinase activity"/>
    <property type="evidence" value="ECO:0007669"/>
    <property type="project" value="UniProtKB-UniRule"/>
</dbReference>
<dbReference type="GO" id="GO:0019301">
    <property type="term" value="P:rhamnose catabolic process"/>
    <property type="evidence" value="ECO:0000318"/>
    <property type="project" value="GO_Central"/>
</dbReference>
<dbReference type="CDD" id="cd07771">
    <property type="entry name" value="ASKHA_NBD_FGGY_RhaB-like"/>
    <property type="match status" value="1"/>
</dbReference>
<dbReference type="FunFam" id="3.30.420.40:FF:000073">
    <property type="entry name" value="Rhamnulokinase"/>
    <property type="match status" value="1"/>
</dbReference>
<dbReference type="FunFam" id="3.30.420.40:FF:000298">
    <property type="entry name" value="Rhamnulokinase"/>
    <property type="match status" value="1"/>
</dbReference>
<dbReference type="Gene3D" id="3.30.420.40">
    <property type="match status" value="2"/>
</dbReference>
<dbReference type="HAMAP" id="MF_01535">
    <property type="entry name" value="Rhamnulokinase"/>
    <property type="match status" value="1"/>
</dbReference>
<dbReference type="InterPro" id="IPR043129">
    <property type="entry name" value="ATPase_NBD"/>
</dbReference>
<dbReference type="InterPro" id="IPR000577">
    <property type="entry name" value="Carb_kinase_FGGY"/>
</dbReference>
<dbReference type="InterPro" id="IPR018485">
    <property type="entry name" value="FGGY_C"/>
</dbReference>
<dbReference type="InterPro" id="IPR018484">
    <property type="entry name" value="FGGY_N"/>
</dbReference>
<dbReference type="InterPro" id="IPR013449">
    <property type="entry name" value="Rhamnulokinase"/>
</dbReference>
<dbReference type="NCBIfam" id="TIGR02627">
    <property type="entry name" value="rhamnulo_kin"/>
    <property type="match status" value="1"/>
</dbReference>
<dbReference type="PANTHER" id="PTHR10196:SF93">
    <property type="entry name" value="L-RHAMNULOKINASE"/>
    <property type="match status" value="1"/>
</dbReference>
<dbReference type="PANTHER" id="PTHR10196">
    <property type="entry name" value="SUGAR KINASE"/>
    <property type="match status" value="1"/>
</dbReference>
<dbReference type="Pfam" id="PF02782">
    <property type="entry name" value="FGGY_C"/>
    <property type="match status" value="1"/>
</dbReference>
<dbReference type="Pfam" id="PF00370">
    <property type="entry name" value="FGGY_N"/>
    <property type="match status" value="1"/>
</dbReference>
<dbReference type="PIRSF" id="PIRSF000538">
    <property type="entry name" value="GlpK"/>
    <property type="match status" value="1"/>
</dbReference>
<dbReference type="SUPFAM" id="SSF53067">
    <property type="entry name" value="Actin-like ATPase domain"/>
    <property type="match status" value="2"/>
</dbReference>
<protein>
    <recommendedName>
        <fullName evidence="1">Rhamnulokinase</fullName>
        <shortName evidence="1">RhaB</shortName>
        <ecNumber evidence="1">2.7.1.5</ecNumber>
    </recommendedName>
    <alternativeName>
        <fullName evidence="1">ATP:L-rhamnulose phosphotransferase</fullName>
    </alternativeName>
    <alternativeName>
        <fullName evidence="1">L-rhamnulose 1-kinase</fullName>
    </alternativeName>
    <alternativeName>
        <fullName evidence="1">Rhamnulose kinase</fullName>
    </alternativeName>
</protein>
<feature type="chain" id="PRO_0000090530" description="Rhamnulokinase">
    <location>
        <begin position="1"/>
        <end position="485"/>
    </location>
</feature>
<feature type="active site" description="Proton acceptor" evidence="1">
    <location>
        <position position="239"/>
    </location>
</feature>
<feature type="binding site" evidence="1">
    <location>
        <begin position="12"/>
        <end position="16"/>
    </location>
    <ligand>
        <name>ATP</name>
        <dbReference type="ChEBI" id="CHEBI:30616"/>
    </ligand>
</feature>
<feature type="binding site" evidence="1">
    <location>
        <position position="80"/>
    </location>
    <ligand>
        <name>substrate</name>
    </ligand>
</feature>
<feature type="binding site" evidence="1">
    <location>
        <begin position="238"/>
        <end position="240"/>
    </location>
    <ligand>
        <name>substrate</name>
    </ligand>
</feature>
<feature type="binding site" evidence="1">
    <location>
        <position position="261"/>
    </location>
    <ligand>
        <name>ATP</name>
        <dbReference type="ChEBI" id="CHEBI:30616"/>
    </ligand>
</feature>
<feature type="binding site" evidence="1">
    <location>
        <position position="298"/>
    </location>
    <ligand>
        <name>substrate</name>
    </ligand>
</feature>
<feature type="binding site" evidence="1">
    <location>
        <position position="306"/>
    </location>
    <ligand>
        <name>ATP</name>
        <dbReference type="ChEBI" id="CHEBI:30616"/>
    </ligand>
</feature>
<feature type="binding site" evidence="1">
    <location>
        <position position="404"/>
    </location>
    <ligand>
        <name>ATP</name>
        <dbReference type="ChEBI" id="CHEBI:30616"/>
    </ligand>
</feature>
<feature type="disulfide bond" evidence="1">
    <location>
        <begin position="355"/>
        <end position="372"/>
    </location>
</feature>
<gene>
    <name evidence="1" type="primary">rhaB</name>
    <name type="ordered locus">BT_3763</name>
</gene>
<sequence length="485" mass="53403">MKQNFFAVDLGATSGRTILGSFIEGGLNLEEINRFPNHLIEVGGHFYWDIYALYRHIIDGLKLVAHRGESIASIGIDTWGVDFVLLGKDGNLLRQPYAYRDPHTVGAPEAFFSRISRSEVYGKTGIQVMNFNSLFQLDTLRRNHDSALEAADKVLFMPDALSYMLTGKMVTEYTIASTAQLVNAHTQRLEPELLKAVGLQEENFGRFVFPGEKIGTLTEEVQKITGLGAIPVIAVAGHDTGSAVAAVPALDRNFAYLSSGTWSLMGVETDAPVITAETEALNFTNEGGVEGTIRLLKNICGMWLLERCRLNWGDTSYPELITEADSCEPFRSLINPDDDCFANPADMEQAIREYCRTTGQPVPEQRGQIVRCIFESLALRYRQVLENLRALSPRPIETLHVIGGGSRNDLLNQFTANAIGIPVVAGPSEATAIGNVMIQAMTVGEATDVAGMRQLISRSIPLKTYHPQDMAAWDAAYIHFKNCVR</sequence>
<accession>Q8A1A3</accession>
<name>RHAB_BACTN</name>
<keyword id="KW-0067">ATP-binding</keyword>
<keyword id="KW-1015">Disulfide bond</keyword>
<keyword id="KW-0418">Kinase</keyword>
<keyword id="KW-0460">Magnesium</keyword>
<keyword id="KW-0547">Nucleotide-binding</keyword>
<keyword id="KW-1185">Reference proteome</keyword>
<keyword id="KW-0684">Rhamnose metabolism</keyword>
<keyword id="KW-0808">Transferase</keyword>
<proteinExistence type="inferred from homology"/>